<sequence>MPSASDHSFSFPILIGDIGGTNARFALLVDAASEPTQLPPVKTGDFATIEDALQNGIFNKISVRPRSAILAVAGPIKSDEIPLTNAGWVIRPKDMLARLGLEDVLVINDFEAQALAIAAPADQDVVQIGGGSVRPRSSRVVLGPGTGLGVAGLVFAQDTWIPVPGEGGHVDIGPRTERDFRIWPFLDPIEGRMAGEQILCGRGIMNLYRAVCAADGVEPLFKDQAEVTTSALSGDDPAAIETVTLFATYLGRVAGDMALVFMARGGVFLAGGISQKILPALMRPDFRAAFEDKAPHSALMRTIPTFAVVHPMAALSGLAAFARAPRDFGVAMEGRRWRS</sequence>
<reference key="1">
    <citation type="journal article" date="2009" name="Appl. Environ. Microbiol.">
        <title>Rhizobium sp. strain NGR234 possesses a remarkable number of secretion systems.</title>
        <authorList>
            <person name="Schmeisser C."/>
            <person name="Liesegang H."/>
            <person name="Krysciak D."/>
            <person name="Bakkou N."/>
            <person name="Le Quere A."/>
            <person name="Wollherr A."/>
            <person name="Heinemeyer I."/>
            <person name="Morgenstern B."/>
            <person name="Pommerening-Roeser A."/>
            <person name="Flores M."/>
            <person name="Palacios R."/>
            <person name="Brenner S."/>
            <person name="Gottschalk G."/>
            <person name="Schmitz R.A."/>
            <person name="Broughton W.J."/>
            <person name="Perret X."/>
            <person name="Strittmatter A.W."/>
            <person name="Streit W.R."/>
        </authorList>
    </citation>
    <scope>NUCLEOTIDE SEQUENCE [LARGE SCALE GENOMIC DNA]</scope>
    <source>
        <strain>NBRC 101917 / NGR234</strain>
    </source>
</reference>
<dbReference type="EC" id="2.7.1.2" evidence="1"/>
<dbReference type="EMBL" id="CP001389">
    <property type="protein sequence ID" value="ACP27209.1"/>
    <property type="molecule type" value="Genomic_DNA"/>
</dbReference>
<dbReference type="RefSeq" id="WP_012709955.1">
    <property type="nucleotide sequence ID" value="NC_012587.1"/>
</dbReference>
<dbReference type="RefSeq" id="YP_002827962.1">
    <property type="nucleotide sequence ID" value="NC_012587.1"/>
</dbReference>
<dbReference type="SMR" id="C3MBY4"/>
<dbReference type="STRING" id="394.NGR_c34850"/>
<dbReference type="KEGG" id="rhi:NGR_c34850"/>
<dbReference type="PATRIC" id="fig|394.7.peg.6334"/>
<dbReference type="eggNOG" id="COG0837">
    <property type="taxonomic scope" value="Bacteria"/>
</dbReference>
<dbReference type="HOGENOM" id="CLU_042582_1_0_5"/>
<dbReference type="OrthoDB" id="9800595at2"/>
<dbReference type="Proteomes" id="UP000001054">
    <property type="component" value="Chromosome"/>
</dbReference>
<dbReference type="GO" id="GO:0005829">
    <property type="term" value="C:cytosol"/>
    <property type="evidence" value="ECO:0007669"/>
    <property type="project" value="TreeGrafter"/>
</dbReference>
<dbReference type="GO" id="GO:0005524">
    <property type="term" value="F:ATP binding"/>
    <property type="evidence" value="ECO:0007669"/>
    <property type="project" value="UniProtKB-UniRule"/>
</dbReference>
<dbReference type="GO" id="GO:0005536">
    <property type="term" value="F:D-glucose binding"/>
    <property type="evidence" value="ECO:0007669"/>
    <property type="project" value="InterPro"/>
</dbReference>
<dbReference type="GO" id="GO:0004340">
    <property type="term" value="F:glucokinase activity"/>
    <property type="evidence" value="ECO:0007669"/>
    <property type="project" value="UniProtKB-UniRule"/>
</dbReference>
<dbReference type="GO" id="GO:0006096">
    <property type="term" value="P:glycolytic process"/>
    <property type="evidence" value="ECO:0007669"/>
    <property type="project" value="UniProtKB-UniRule"/>
</dbReference>
<dbReference type="CDD" id="cd24008">
    <property type="entry name" value="ASKHA_NBD_GLK"/>
    <property type="match status" value="1"/>
</dbReference>
<dbReference type="Gene3D" id="3.30.420.40">
    <property type="match status" value="1"/>
</dbReference>
<dbReference type="Gene3D" id="3.40.367.20">
    <property type="match status" value="1"/>
</dbReference>
<dbReference type="HAMAP" id="MF_00524">
    <property type="entry name" value="Glucokinase"/>
    <property type="match status" value="1"/>
</dbReference>
<dbReference type="InterPro" id="IPR043129">
    <property type="entry name" value="ATPase_NBD"/>
</dbReference>
<dbReference type="InterPro" id="IPR050201">
    <property type="entry name" value="Bacterial_glucokinase"/>
</dbReference>
<dbReference type="InterPro" id="IPR003836">
    <property type="entry name" value="Glucokinase"/>
</dbReference>
<dbReference type="NCBIfam" id="TIGR00749">
    <property type="entry name" value="glk"/>
    <property type="match status" value="1"/>
</dbReference>
<dbReference type="NCBIfam" id="NF001417">
    <property type="entry name" value="PRK00292.1-4"/>
    <property type="match status" value="1"/>
</dbReference>
<dbReference type="PANTHER" id="PTHR47690">
    <property type="entry name" value="GLUCOKINASE"/>
    <property type="match status" value="1"/>
</dbReference>
<dbReference type="PANTHER" id="PTHR47690:SF1">
    <property type="entry name" value="GLUCOKINASE"/>
    <property type="match status" value="1"/>
</dbReference>
<dbReference type="Pfam" id="PF02685">
    <property type="entry name" value="Glucokinase"/>
    <property type="match status" value="1"/>
</dbReference>
<dbReference type="SUPFAM" id="SSF53067">
    <property type="entry name" value="Actin-like ATPase domain"/>
    <property type="match status" value="1"/>
</dbReference>
<evidence type="ECO:0000255" key="1">
    <source>
        <dbReference type="HAMAP-Rule" id="MF_00524"/>
    </source>
</evidence>
<keyword id="KW-0067">ATP-binding</keyword>
<keyword id="KW-0963">Cytoplasm</keyword>
<keyword id="KW-0324">Glycolysis</keyword>
<keyword id="KW-0418">Kinase</keyword>
<keyword id="KW-0547">Nucleotide-binding</keyword>
<keyword id="KW-1185">Reference proteome</keyword>
<keyword id="KW-0808">Transferase</keyword>
<proteinExistence type="inferred from homology"/>
<protein>
    <recommendedName>
        <fullName evidence="1">Glucokinase</fullName>
        <ecNumber evidence="1">2.7.1.2</ecNumber>
    </recommendedName>
    <alternativeName>
        <fullName evidence="1">Glucose kinase</fullName>
    </alternativeName>
</protein>
<accession>C3MBY4</accession>
<organism>
    <name type="scientific">Sinorhizobium fredii (strain NBRC 101917 / NGR234)</name>
    <dbReference type="NCBI Taxonomy" id="394"/>
    <lineage>
        <taxon>Bacteria</taxon>
        <taxon>Pseudomonadati</taxon>
        <taxon>Pseudomonadota</taxon>
        <taxon>Alphaproteobacteria</taxon>
        <taxon>Hyphomicrobiales</taxon>
        <taxon>Rhizobiaceae</taxon>
        <taxon>Sinorhizobium/Ensifer group</taxon>
        <taxon>Sinorhizobium</taxon>
    </lineage>
</organism>
<name>GLK_SINFN</name>
<comment type="catalytic activity">
    <reaction evidence="1">
        <text>D-glucose + ATP = D-glucose 6-phosphate + ADP + H(+)</text>
        <dbReference type="Rhea" id="RHEA:17825"/>
        <dbReference type="ChEBI" id="CHEBI:4167"/>
        <dbReference type="ChEBI" id="CHEBI:15378"/>
        <dbReference type="ChEBI" id="CHEBI:30616"/>
        <dbReference type="ChEBI" id="CHEBI:61548"/>
        <dbReference type="ChEBI" id="CHEBI:456216"/>
        <dbReference type="EC" id="2.7.1.2"/>
    </reaction>
</comment>
<comment type="subcellular location">
    <subcellularLocation>
        <location evidence="1">Cytoplasm</location>
    </subcellularLocation>
</comment>
<comment type="similarity">
    <text evidence="1">Belongs to the bacterial glucokinase family.</text>
</comment>
<feature type="chain" id="PRO_1000146253" description="Glucokinase">
    <location>
        <begin position="1"/>
        <end position="339"/>
    </location>
</feature>
<feature type="binding site" evidence="1">
    <location>
        <begin position="16"/>
        <end position="21"/>
    </location>
    <ligand>
        <name>ATP</name>
        <dbReference type="ChEBI" id="CHEBI:30616"/>
    </ligand>
</feature>
<gene>
    <name evidence="1" type="primary">glk</name>
    <name type="ordered locus">NGR_c34850</name>
</gene>